<evidence type="ECO:0000255" key="1">
    <source>
        <dbReference type="HAMAP-Rule" id="MF_01302"/>
    </source>
</evidence>
<evidence type="ECO:0000305" key="2"/>
<proteinExistence type="inferred from homology"/>
<reference key="1">
    <citation type="journal article" date="2013" name="Stand. Genomic Sci.">
        <title>Complete genome sequence of Arthrobacter sp. strain FB24.</title>
        <authorList>
            <person name="Nakatsu C.H."/>
            <person name="Barabote R."/>
            <person name="Thompson S."/>
            <person name="Bruce D."/>
            <person name="Detter C."/>
            <person name="Brettin T."/>
            <person name="Han C."/>
            <person name="Beasley F."/>
            <person name="Chen W."/>
            <person name="Konopka A."/>
            <person name="Xie G."/>
        </authorList>
    </citation>
    <scope>NUCLEOTIDE SEQUENCE [LARGE SCALE GENOMIC DNA]</scope>
    <source>
        <strain>FB24</strain>
    </source>
</reference>
<name>RS8_ARTS2</name>
<keyword id="KW-1185">Reference proteome</keyword>
<keyword id="KW-0687">Ribonucleoprotein</keyword>
<keyword id="KW-0689">Ribosomal protein</keyword>
<keyword id="KW-0694">RNA-binding</keyword>
<keyword id="KW-0699">rRNA-binding</keyword>
<protein>
    <recommendedName>
        <fullName evidence="1">Small ribosomal subunit protein uS8</fullName>
    </recommendedName>
    <alternativeName>
        <fullName evidence="2">30S ribosomal protein S8</fullName>
    </alternativeName>
</protein>
<feature type="chain" id="PRO_0000290800" description="Small ribosomal subunit protein uS8">
    <location>
        <begin position="1"/>
        <end position="132"/>
    </location>
</feature>
<accession>A0JZ71</accession>
<gene>
    <name evidence="1" type="primary">rpsH</name>
    <name type="ordered locus">Arth_2962</name>
</gene>
<organism>
    <name type="scientific">Arthrobacter sp. (strain FB24)</name>
    <dbReference type="NCBI Taxonomy" id="290399"/>
    <lineage>
        <taxon>Bacteria</taxon>
        <taxon>Bacillati</taxon>
        <taxon>Actinomycetota</taxon>
        <taxon>Actinomycetes</taxon>
        <taxon>Micrococcales</taxon>
        <taxon>Micrococcaceae</taxon>
        <taxon>Arthrobacter</taxon>
    </lineage>
</organism>
<comment type="function">
    <text evidence="1">One of the primary rRNA binding proteins, it binds directly to 16S rRNA central domain where it helps coordinate assembly of the platform of the 30S subunit.</text>
</comment>
<comment type="subunit">
    <text evidence="1">Part of the 30S ribosomal subunit. Contacts proteins S5 and S12.</text>
</comment>
<comment type="similarity">
    <text evidence="1">Belongs to the universal ribosomal protein uS8 family.</text>
</comment>
<sequence length="132" mass="14318">MTMTDPVADMLTRLRNANSAYHDTVTMPYSKLKARVADILKAEGYIASWKEEDAEVGKKLTLELKFGPNRERSIAGVRRISKPGLRVYAKSTNLPHVLGGLGVAILSTSSGLLTDKQAGKKGVGGEVLAYVW</sequence>
<dbReference type="EMBL" id="CP000454">
    <property type="protein sequence ID" value="ABK04341.1"/>
    <property type="molecule type" value="Genomic_DNA"/>
</dbReference>
<dbReference type="RefSeq" id="WP_011692798.1">
    <property type="nucleotide sequence ID" value="NC_008541.1"/>
</dbReference>
<dbReference type="SMR" id="A0JZ71"/>
<dbReference type="STRING" id="290399.Arth_2962"/>
<dbReference type="KEGG" id="art:Arth_2962"/>
<dbReference type="eggNOG" id="COG0096">
    <property type="taxonomic scope" value="Bacteria"/>
</dbReference>
<dbReference type="HOGENOM" id="CLU_098428_0_1_11"/>
<dbReference type="OrthoDB" id="9802617at2"/>
<dbReference type="Proteomes" id="UP000000754">
    <property type="component" value="Chromosome"/>
</dbReference>
<dbReference type="GO" id="GO:1990904">
    <property type="term" value="C:ribonucleoprotein complex"/>
    <property type="evidence" value="ECO:0007669"/>
    <property type="project" value="UniProtKB-KW"/>
</dbReference>
<dbReference type="GO" id="GO:0005840">
    <property type="term" value="C:ribosome"/>
    <property type="evidence" value="ECO:0007669"/>
    <property type="project" value="UniProtKB-KW"/>
</dbReference>
<dbReference type="GO" id="GO:0019843">
    <property type="term" value="F:rRNA binding"/>
    <property type="evidence" value="ECO:0007669"/>
    <property type="project" value="UniProtKB-UniRule"/>
</dbReference>
<dbReference type="GO" id="GO:0003735">
    <property type="term" value="F:structural constituent of ribosome"/>
    <property type="evidence" value="ECO:0007669"/>
    <property type="project" value="InterPro"/>
</dbReference>
<dbReference type="GO" id="GO:0006412">
    <property type="term" value="P:translation"/>
    <property type="evidence" value="ECO:0007669"/>
    <property type="project" value="UniProtKB-UniRule"/>
</dbReference>
<dbReference type="FunFam" id="3.30.1370.30:FF:000002">
    <property type="entry name" value="30S ribosomal protein S8"/>
    <property type="match status" value="1"/>
</dbReference>
<dbReference type="FunFam" id="3.30.1490.10:FF:000001">
    <property type="entry name" value="30S ribosomal protein S8"/>
    <property type="match status" value="1"/>
</dbReference>
<dbReference type="Gene3D" id="3.30.1370.30">
    <property type="match status" value="1"/>
</dbReference>
<dbReference type="Gene3D" id="3.30.1490.10">
    <property type="match status" value="1"/>
</dbReference>
<dbReference type="HAMAP" id="MF_01302_B">
    <property type="entry name" value="Ribosomal_uS8_B"/>
    <property type="match status" value="1"/>
</dbReference>
<dbReference type="InterPro" id="IPR000630">
    <property type="entry name" value="Ribosomal_uS8"/>
</dbReference>
<dbReference type="InterPro" id="IPR035987">
    <property type="entry name" value="Ribosomal_uS8_sf"/>
</dbReference>
<dbReference type="NCBIfam" id="NF001109">
    <property type="entry name" value="PRK00136.1"/>
    <property type="match status" value="1"/>
</dbReference>
<dbReference type="PANTHER" id="PTHR11758">
    <property type="entry name" value="40S RIBOSOMAL PROTEIN S15A"/>
    <property type="match status" value="1"/>
</dbReference>
<dbReference type="Pfam" id="PF00410">
    <property type="entry name" value="Ribosomal_S8"/>
    <property type="match status" value="1"/>
</dbReference>
<dbReference type="SUPFAM" id="SSF56047">
    <property type="entry name" value="Ribosomal protein S8"/>
    <property type="match status" value="1"/>
</dbReference>